<comment type="function">
    <text evidence="1">Capsid vertex-specific component that plays a role during viral DNA encapsidation, assuring correct genome cleavage and presumably stabilizing capsids that contain full-length viral genomes. Participates in the interaction between the capsid and the tegument through interaction with the large tegument protein/LTP.</text>
</comment>
<comment type="subunit">
    <text evidence="1">Heterodimerizes with CVC1. Interacts with major capsid protein/MCP and triplex capsid protein 1/TRX1 at the pentamer vertices. Interacts with the large tegument protein/LTP.</text>
</comment>
<comment type="subcellular location">
    <subcellularLocation>
        <location evidence="1">Virion</location>
    </subcellularLocation>
    <subcellularLocation>
        <location evidence="1">Host nucleus</location>
    </subcellularLocation>
</comment>
<comment type="similarity">
    <text evidence="1">Belongs to the herpesviridae CVC2 protein family.</text>
</comment>
<reference key="1">
    <citation type="journal article" date="1992" name="Virology">
        <title>The DNA sequence of equine herpesvirus-1.</title>
        <authorList>
            <person name="Telford E.A.R."/>
            <person name="Watson M.S."/>
            <person name="McBride K."/>
            <person name="Davison A.J."/>
        </authorList>
    </citation>
    <scope>NUCLEOTIDE SEQUENCE [LARGE SCALE GENOMIC DNA]</scope>
</reference>
<organism>
    <name type="scientific">Equine herpesvirus 1 (strain Ab4p)</name>
    <name type="common">EHV-1</name>
    <name type="synonym">Equine abortion virus</name>
    <dbReference type="NCBI Taxonomy" id="31520"/>
    <lineage>
        <taxon>Viruses</taxon>
        <taxon>Duplodnaviria</taxon>
        <taxon>Heunggongvirae</taxon>
        <taxon>Peploviricota</taxon>
        <taxon>Herviviricetes</taxon>
        <taxon>Herpesvirales</taxon>
        <taxon>Orthoherpesviridae</taxon>
        <taxon>Alphaherpesvirinae</taxon>
        <taxon>Varicellovirus</taxon>
        <taxon>Varicellovirus equidalpha1</taxon>
        <taxon>Equid alphaherpesvirus 1</taxon>
    </lineage>
</organism>
<evidence type="ECO:0000255" key="1">
    <source>
        <dbReference type="HAMAP-Rule" id="MF_04025"/>
    </source>
</evidence>
<evidence type="ECO:0000256" key="2">
    <source>
        <dbReference type="SAM" id="MobiDB-lite"/>
    </source>
</evidence>
<feature type="chain" id="PRO_0000115995" description="Capsid vertex component 2">
    <location>
        <begin position="1"/>
        <end position="587"/>
    </location>
</feature>
<feature type="region of interest" description="Interaction with major capsid protein/MCP" evidence="1">
    <location>
        <begin position="1"/>
        <end position="53"/>
    </location>
</feature>
<feature type="region of interest" description="Disordered" evidence="2">
    <location>
        <begin position="113"/>
        <end position="132"/>
    </location>
</feature>
<proteinExistence type="inferred from homology"/>
<sequence length="587" mass="63692">MAEYVNYVLGSLYVSDTATSTIPTDVRNFIAPPFPLNFWSGPTFTVSSNTRADPLKLVAARHRAAAAAIDTLEAQSQYGVANVDALIRPLERQVAKVADALAALEDAARAAESADAATPQVNASEADQRPDNIGQSLSEIQIAKNDVPMEFDTNLAVDLLATVFVSRAAGGSNGVVFGTWYRALQDRLVTERPVATRSIDYRDGRMSKTFMTTAVVSLQSCGRLYIGNRPYSAFEAAVLCLHLAHRAVNSNYTYPTSFSGLIEQLPVYIEAFSTALGDGTLGKVGYEFNGARLPKNQFHVPGGGGRYERGALNGHGVLETLIRLKVLPAIPGSLGTTSTAVGPELDADQTAYIDDVNKAAAAFLVRAQNLFLTEDQTLLRSTINTITALLLLRRLLWNGNVYTDRLRNNFQLGAIVPNLAVSQRDARGASGGDAAAMVSRSGNNNFTFLCERYVSPIYIANREVELTQLFPGLAALCLDAQTVARDQPQHRAVNVSTGRNQTNLTRLIGIELENRRRTAPVPINEVLAAHDAVALQYERGLGLLMQKPRLRASLEETRRLGQFNVASDYDLLYFVCLGYIPSLTSAM</sequence>
<accession>P28928</accession>
<accession>Q6DLH4</accession>
<keyword id="KW-0167">Capsid protein</keyword>
<keyword id="KW-1048">Host nucleus</keyword>
<keyword id="KW-0945">Host-virus interaction</keyword>
<keyword id="KW-1185">Reference proteome</keyword>
<keyword id="KW-0231">Viral genome packaging</keyword>
<keyword id="KW-1163">Viral penetration into host nucleus</keyword>
<keyword id="KW-1188">Viral release from host cell</keyword>
<keyword id="KW-0946">Virion</keyword>
<keyword id="KW-1160">Virus entry into host cell</keyword>
<organismHost>
    <name type="scientific">Equus caballus</name>
    <name type="common">Horse</name>
    <dbReference type="NCBI Taxonomy" id="9796"/>
</organismHost>
<gene>
    <name evidence="1" type="primary">CVC2</name>
    <name type="ordered locus">36</name>
</gene>
<name>CVC2_EHV1B</name>
<dbReference type="EMBL" id="AY665713">
    <property type="protein sequence ID" value="AAT67294.1"/>
    <property type="molecule type" value="Genomic_DNA"/>
</dbReference>
<dbReference type="PIR" id="B36799">
    <property type="entry name" value="WZBEC9"/>
</dbReference>
<dbReference type="SMR" id="P28928"/>
<dbReference type="KEGG" id="vg:1487558"/>
<dbReference type="Proteomes" id="UP000001189">
    <property type="component" value="Segment"/>
</dbReference>
<dbReference type="GO" id="GO:0043657">
    <property type="term" value="C:host cell"/>
    <property type="evidence" value="ECO:0007669"/>
    <property type="project" value="GOC"/>
</dbReference>
<dbReference type="GO" id="GO:0042025">
    <property type="term" value="C:host cell nucleus"/>
    <property type="evidence" value="ECO:0007669"/>
    <property type="project" value="UniProtKB-SubCell"/>
</dbReference>
<dbReference type="GO" id="GO:0019028">
    <property type="term" value="C:viral capsid"/>
    <property type="evidence" value="ECO:0007669"/>
    <property type="project" value="UniProtKB-KW"/>
</dbReference>
<dbReference type="GO" id="GO:0046718">
    <property type="term" value="P:symbiont entry into host cell"/>
    <property type="evidence" value="ECO:0007669"/>
    <property type="project" value="UniProtKB-KW"/>
</dbReference>
<dbReference type="GO" id="GO:0019072">
    <property type="term" value="P:viral genome packaging"/>
    <property type="evidence" value="ECO:0007669"/>
    <property type="project" value="InterPro"/>
</dbReference>
<dbReference type="GO" id="GO:0075732">
    <property type="term" value="P:viral penetration into host nucleus"/>
    <property type="evidence" value="ECO:0007669"/>
    <property type="project" value="UniProtKB-KW"/>
</dbReference>
<dbReference type="HAMAP" id="MF_04025">
    <property type="entry name" value="HSV_CVC2"/>
    <property type="match status" value="1"/>
</dbReference>
<dbReference type="InterPro" id="IPR002493">
    <property type="entry name" value="Herpes_UL25"/>
</dbReference>
<dbReference type="Pfam" id="PF01499">
    <property type="entry name" value="Herpes_UL25"/>
    <property type="match status" value="1"/>
</dbReference>
<protein>
    <recommendedName>
        <fullName evidence="1">Capsid vertex component 2</fullName>
    </recommendedName>
</protein>